<gene>
    <name evidence="1" type="primary">arcA</name>
    <name type="ordered locus">lmo0043</name>
</gene>
<dbReference type="EC" id="3.5.3.6" evidence="1"/>
<dbReference type="EMBL" id="AL591973">
    <property type="protein sequence ID" value="CAC98258.1"/>
    <property type="molecule type" value="Genomic_DNA"/>
</dbReference>
<dbReference type="PIR" id="AD1080">
    <property type="entry name" value="AD1080"/>
</dbReference>
<dbReference type="RefSeq" id="NP_463576.1">
    <property type="nucleotide sequence ID" value="NC_003210.1"/>
</dbReference>
<dbReference type="RefSeq" id="WP_010989328.1">
    <property type="nucleotide sequence ID" value="NZ_CP149495.1"/>
</dbReference>
<dbReference type="SMR" id="Q8YAS0"/>
<dbReference type="STRING" id="169963.gene:17592678"/>
<dbReference type="PaxDb" id="169963-lmo0043"/>
<dbReference type="EnsemblBacteria" id="CAC98258">
    <property type="protein sequence ID" value="CAC98258"/>
    <property type="gene ID" value="CAC98258"/>
</dbReference>
<dbReference type="GeneID" id="985417"/>
<dbReference type="KEGG" id="lmo:lmo0043"/>
<dbReference type="PATRIC" id="fig|169963.11.peg.44"/>
<dbReference type="eggNOG" id="COG2235">
    <property type="taxonomic scope" value="Bacteria"/>
</dbReference>
<dbReference type="HOGENOM" id="CLU_052662_0_1_9"/>
<dbReference type="OrthoDB" id="9807502at2"/>
<dbReference type="PhylomeDB" id="Q8YAS0"/>
<dbReference type="BioCyc" id="LMON169963:LMO0043-MONOMER"/>
<dbReference type="UniPathway" id="UPA00254">
    <property type="reaction ID" value="UER00364"/>
</dbReference>
<dbReference type="Proteomes" id="UP000000817">
    <property type="component" value="Chromosome"/>
</dbReference>
<dbReference type="GO" id="GO:0005737">
    <property type="term" value="C:cytoplasm"/>
    <property type="evidence" value="ECO:0007669"/>
    <property type="project" value="UniProtKB-SubCell"/>
</dbReference>
<dbReference type="GO" id="GO:0016990">
    <property type="term" value="F:arginine deiminase activity"/>
    <property type="evidence" value="ECO:0000318"/>
    <property type="project" value="GO_Central"/>
</dbReference>
<dbReference type="GO" id="GO:0019547">
    <property type="term" value="P:arginine catabolic process to ornithine"/>
    <property type="evidence" value="ECO:0007669"/>
    <property type="project" value="UniProtKB-UniRule"/>
</dbReference>
<dbReference type="GO" id="GO:0019546">
    <property type="term" value="P:arginine deiminase pathway"/>
    <property type="evidence" value="ECO:0000318"/>
    <property type="project" value="GO_Central"/>
</dbReference>
<dbReference type="FunFam" id="1.10.3930.10:FF:000005">
    <property type="entry name" value="Arginine deiminase"/>
    <property type="match status" value="1"/>
</dbReference>
<dbReference type="Gene3D" id="1.10.3930.10">
    <property type="entry name" value="Arginine deiminase"/>
    <property type="match status" value="1"/>
</dbReference>
<dbReference type="Gene3D" id="3.75.10.10">
    <property type="entry name" value="L-arginine/glycine Amidinotransferase, Chain A"/>
    <property type="match status" value="1"/>
</dbReference>
<dbReference type="HAMAP" id="MF_00242">
    <property type="entry name" value="Arg_deiminase"/>
    <property type="match status" value="1"/>
</dbReference>
<dbReference type="InterPro" id="IPR003876">
    <property type="entry name" value="Arg_deiminase"/>
</dbReference>
<dbReference type="NCBIfam" id="TIGR01078">
    <property type="entry name" value="arcA"/>
    <property type="match status" value="1"/>
</dbReference>
<dbReference type="NCBIfam" id="NF002381">
    <property type="entry name" value="PRK01388.1"/>
    <property type="match status" value="1"/>
</dbReference>
<dbReference type="PANTHER" id="PTHR47271">
    <property type="entry name" value="ARGININE DEIMINASE"/>
    <property type="match status" value="1"/>
</dbReference>
<dbReference type="PANTHER" id="PTHR47271:SF2">
    <property type="entry name" value="ARGININE DEIMINASE"/>
    <property type="match status" value="1"/>
</dbReference>
<dbReference type="Pfam" id="PF02274">
    <property type="entry name" value="ADI"/>
    <property type="match status" value="1"/>
</dbReference>
<dbReference type="PIRSF" id="PIRSF006356">
    <property type="entry name" value="Arg_deiminase"/>
    <property type="match status" value="1"/>
</dbReference>
<dbReference type="PRINTS" id="PR01466">
    <property type="entry name" value="ARGDEIMINASE"/>
</dbReference>
<dbReference type="SUPFAM" id="SSF55909">
    <property type="entry name" value="Pentein"/>
    <property type="match status" value="1"/>
</dbReference>
<sequence length="410" mass="47101">MKMEQALNITSEIGKLQTVLVKRPGSELENITPEYLESLLFDDIPYLKMMQKEHDFFAKTMRDSNIEVLYLEKLAAEALREANNKESFLTKMIKESNQMDESALYVRDYLMSFDEEEMIRKLMSGLKKSEIPERKKKHLNEMMDEQYPFFLDPLPNLYFTRDPAAVIGNGVTINRMFQPARRRESIFIELILKHHPRFSNQDIPVWSGRGEPFSLEGGDELVLNEETVLVGVSERTDARAVERLAESLFNRSPKIKRVLAVEIPETRSFMHLDTVFTMVNFAQFTIHPAIQNQQGELNIYILEKSENGLEITPRRDFQRVIAEVLDEPEIDFIPCGGEDVIVSAREQWNDGANTLAIAPGEVITYDRNQVSNDLLRSAGIKVHEVISSELSRGRGGPRCMTMPLVRENLK</sequence>
<organism>
    <name type="scientific">Listeria monocytogenes serovar 1/2a (strain ATCC BAA-679 / EGD-e)</name>
    <dbReference type="NCBI Taxonomy" id="169963"/>
    <lineage>
        <taxon>Bacteria</taxon>
        <taxon>Bacillati</taxon>
        <taxon>Bacillota</taxon>
        <taxon>Bacilli</taxon>
        <taxon>Bacillales</taxon>
        <taxon>Listeriaceae</taxon>
        <taxon>Listeria</taxon>
    </lineage>
</organism>
<feature type="chain" id="PRO_0000182218" description="Arginine deiminase">
    <location>
        <begin position="1"/>
        <end position="410"/>
    </location>
</feature>
<feature type="active site" description="Amidino-cysteine intermediate" evidence="1">
    <location>
        <position position="399"/>
    </location>
</feature>
<reference key="1">
    <citation type="journal article" date="2001" name="Science">
        <title>Comparative genomics of Listeria species.</title>
        <authorList>
            <person name="Glaser P."/>
            <person name="Frangeul L."/>
            <person name="Buchrieser C."/>
            <person name="Rusniok C."/>
            <person name="Amend A."/>
            <person name="Baquero F."/>
            <person name="Berche P."/>
            <person name="Bloecker H."/>
            <person name="Brandt P."/>
            <person name="Chakraborty T."/>
            <person name="Charbit A."/>
            <person name="Chetouani F."/>
            <person name="Couve E."/>
            <person name="de Daruvar A."/>
            <person name="Dehoux P."/>
            <person name="Domann E."/>
            <person name="Dominguez-Bernal G."/>
            <person name="Duchaud E."/>
            <person name="Durant L."/>
            <person name="Dussurget O."/>
            <person name="Entian K.-D."/>
            <person name="Fsihi H."/>
            <person name="Garcia-del Portillo F."/>
            <person name="Garrido P."/>
            <person name="Gautier L."/>
            <person name="Goebel W."/>
            <person name="Gomez-Lopez N."/>
            <person name="Hain T."/>
            <person name="Hauf J."/>
            <person name="Jackson D."/>
            <person name="Jones L.-M."/>
            <person name="Kaerst U."/>
            <person name="Kreft J."/>
            <person name="Kuhn M."/>
            <person name="Kunst F."/>
            <person name="Kurapkat G."/>
            <person name="Madueno E."/>
            <person name="Maitournam A."/>
            <person name="Mata Vicente J."/>
            <person name="Ng E."/>
            <person name="Nedjari H."/>
            <person name="Nordsiek G."/>
            <person name="Novella S."/>
            <person name="de Pablos B."/>
            <person name="Perez-Diaz J.-C."/>
            <person name="Purcell R."/>
            <person name="Remmel B."/>
            <person name="Rose M."/>
            <person name="Schlueter T."/>
            <person name="Simoes N."/>
            <person name="Tierrez A."/>
            <person name="Vazquez-Boland J.-A."/>
            <person name="Voss H."/>
            <person name="Wehland J."/>
            <person name="Cossart P."/>
        </authorList>
    </citation>
    <scope>NUCLEOTIDE SEQUENCE [LARGE SCALE GENOMIC DNA]</scope>
    <source>
        <strain>ATCC BAA-679 / EGD-e</strain>
    </source>
</reference>
<name>ARCA_LISMO</name>
<accession>Q8YAS0</accession>
<evidence type="ECO:0000255" key="1">
    <source>
        <dbReference type="HAMAP-Rule" id="MF_00242"/>
    </source>
</evidence>
<comment type="catalytic activity">
    <reaction evidence="1">
        <text>L-arginine + H2O = L-citrulline + NH4(+)</text>
        <dbReference type="Rhea" id="RHEA:19597"/>
        <dbReference type="ChEBI" id="CHEBI:15377"/>
        <dbReference type="ChEBI" id="CHEBI:28938"/>
        <dbReference type="ChEBI" id="CHEBI:32682"/>
        <dbReference type="ChEBI" id="CHEBI:57743"/>
        <dbReference type="EC" id="3.5.3.6"/>
    </reaction>
</comment>
<comment type="pathway">
    <text evidence="1">Amino-acid degradation; L-arginine degradation via ADI pathway; carbamoyl phosphate from L-arginine: step 1/2.</text>
</comment>
<comment type="subcellular location">
    <subcellularLocation>
        <location evidence="1">Cytoplasm</location>
    </subcellularLocation>
</comment>
<comment type="similarity">
    <text evidence="1">Belongs to the arginine deiminase family.</text>
</comment>
<proteinExistence type="inferred from homology"/>
<protein>
    <recommendedName>
        <fullName evidence="1">Arginine deiminase</fullName>
        <shortName evidence="1">ADI</shortName>
        <ecNumber evidence="1">3.5.3.6</ecNumber>
    </recommendedName>
    <alternativeName>
        <fullName evidence="1">Arginine dihydrolase</fullName>
        <shortName evidence="1">AD</shortName>
    </alternativeName>
</protein>
<keyword id="KW-0056">Arginine metabolism</keyword>
<keyword id="KW-0963">Cytoplasm</keyword>
<keyword id="KW-0378">Hydrolase</keyword>
<keyword id="KW-1185">Reference proteome</keyword>